<keyword id="KW-1185">Reference proteome</keyword>
<keyword id="KW-0687">Ribonucleoprotein</keyword>
<keyword id="KW-0689">Ribosomal protein</keyword>
<keyword id="KW-0694">RNA-binding</keyword>
<keyword id="KW-0699">rRNA-binding</keyword>
<feature type="chain" id="PRO_1000165336" description="Small ribosomal subunit protein uS8">
    <location>
        <begin position="1"/>
        <end position="131"/>
    </location>
</feature>
<proteinExistence type="inferred from homology"/>
<dbReference type="EMBL" id="CP001154">
    <property type="protein sequence ID" value="ACO73262.1"/>
    <property type="molecule type" value="Genomic_DNA"/>
</dbReference>
<dbReference type="RefSeq" id="WP_012695756.1">
    <property type="nucleotide sequence ID" value="NC_012559.1"/>
</dbReference>
<dbReference type="SMR" id="C1DAT1"/>
<dbReference type="STRING" id="557598.LHK_00267"/>
<dbReference type="GeneID" id="75109493"/>
<dbReference type="KEGG" id="lhk:LHK_00267"/>
<dbReference type="eggNOG" id="COG0096">
    <property type="taxonomic scope" value="Bacteria"/>
</dbReference>
<dbReference type="HOGENOM" id="CLU_098428_0_0_4"/>
<dbReference type="Proteomes" id="UP000002010">
    <property type="component" value="Chromosome"/>
</dbReference>
<dbReference type="GO" id="GO:1990904">
    <property type="term" value="C:ribonucleoprotein complex"/>
    <property type="evidence" value="ECO:0007669"/>
    <property type="project" value="UniProtKB-KW"/>
</dbReference>
<dbReference type="GO" id="GO:0005840">
    <property type="term" value="C:ribosome"/>
    <property type="evidence" value="ECO:0007669"/>
    <property type="project" value="UniProtKB-KW"/>
</dbReference>
<dbReference type="GO" id="GO:0019843">
    <property type="term" value="F:rRNA binding"/>
    <property type="evidence" value="ECO:0007669"/>
    <property type="project" value="UniProtKB-UniRule"/>
</dbReference>
<dbReference type="GO" id="GO:0003735">
    <property type="term" value="F:structural constituent of ribosome"/>
    <property type="evidence" value="ECO:0007669"/>
    <property type="project" value="InterPro"/>
</dbReference>
<dbReference type="GO" id="GO:0006412">
    <property type="term" value="P:translation"/>
    <property type="evidence" value="ECO:0007669"/>
    <property type="project" value="UniProtKB-UniRule"/>
</dbReference>
<dbReference type="FunFam" id="3.30.1370.30:FF:000003">
    <property type="entry name" value="30S ribosomal protein S8"/>
    <property type="match status" value="1"/>
</dbReference>
<dbReference type="FunFam" id="3.30.1490.10:FF:000001">
    <property type="entry name" value="30S ribosomal protein S8"/>
    <property type="match status" value="1"/>
</dbReference>
<dbReference type="Gene3D" id="3.30.1370.30">
    <property type="match status" value="1"/>
</dbReference>
<dbReference type="Gene3D" id="3.30.1490.10">
    <property type="match status" value="1"/>
</dbReference>
<dbReference type="HAMAP" id="MF_01302_B">
    <property type="entry name" value="Ribosomal_uS8_B"/>
    <property type="match status" value="1"/>
</dbReference>
<dbReference type="InterPro" id="IPR000630">
    <property type="entry name" value="Ribosomal_uS8"/>
</dbReference>
<dbReference type="InterPro" id="IPR047863">
    <property type="entry name" value="Ribosomal_uS8_CS"/>
</dbReference>
<dbReference type="InterPro" id="IPR035987">
    <property type="entry name" value="Ribosomal_uS8_sf"/>
</dbReference>
<dbReference type="NCBIfam" id="NF001109">
    <property type="entry name" value="PRK00136.1"/>
    <property type="match status" value="1"/>
</dbReference>
<dbReference type="PANTHER" id="PTHR11758">
    <property type="entry name" value="40S RIBOSOMAL PROTEIN S15A"/>
    <property type="match status" value="1"/>
</dbReference>
<dbReference type="Pfam" id="PF00410">
    <property type="entry name" value="Ribosomal_S8"/>
    <property type="match status" value="1"/>
</dbReference>
<dbReference type="SUPFAM" id="SSF56047">
    <property type="entry name" value="Ribosomal protein S8"/>
    <property type="match status" value="1"/>
</dbReference>
<dbReference type="PROSITE" id="PS00053">
    <property type="entry name" value="RIBOSOMAL_S8"/>
    <property type="match status" value="1"/>
</dbReference>
<reference key="1">
    <citation type="journal article" date="2009" name="PLoS Genet.">
        <title>The complete genome and proteome of Laribacter hongkongensis reveal potential mechanisms for adaptations to different temperatures and habitats.</title>
        <authorList>
            <person name="Woo P.C.Y."/>
            <person name="Lau S.K.P."/>
            <person name="Tse H."/>
            <person name="Teng J.L.L."/>
            <person name="Curreem S.O."/>
            <person name="Tsang A.K.L."/>
            <person name="Fan R.Y.Y."/>
            <person name="Wong G.K.M."/>
            <person name="Huang Y."/>
            <person name="Loman N.J."/>
            <person name="Snyder L.A.S."/>
            <person name="Cai J.J."/>
            <person name="Huang J.-D."/>
            <person name="Mak W."/>
            <person name="Pallen M.J."/>
            <person name="Lok S."/>
            <person name="Yuen K.-Y."/>
        </authorList>
    </citation>
    <scope>NUCLEOTIDE SEQUENCE [LARGE SCALE GENOMIC DNA]</scope>
    <source>
        <strain>HLHK9</strain>
    </source>
</reference>
<accession>C1DAT1</accession>
<evidence type="ECO:0000255" key="1">
    <source>
        <dbReference type="HAMAP-Rule" id="MF_01302"/>
    </source>
</evidence>
<evidence type="ECO:0000305" key="2"/>
<comment type="function">
    <text evidence="1">One of the primary rRNA binding proteins, it binds directly to 16S rRNA central domain where it helps coordinate assembly of the platform of the 30S subunit.</text>
</comment>
<comment type="subunit">
    <text evidence="1">Part of the 30S ribosomal subunit. Contacts proteins S5 and S12.</text>
</comment>
<comment type="similarity">
    <text evidence="1">Belongs to the universal ribosomal protein uS8 family.</text>
</comment>
<sequence length="131" mass="14242">MSMHDPISDMLTRIRNAQRVTKASVAMPSSKLKVAIAAVLKDEGYIEDFAVTGEEKKPVLDIQLKYYAGRPVIERIERVSRPGLRIYKGSNDIPRVMNGLGVAIVSTSKGVMTDRKARAAGIGGELLCIVA</sequence>
<gene>
    <name evidence="1" type="primary">rpsH</name>
    <name type="ordered locus">LHK_00267</name>
</gene>
<name>RS8_LARHH</name>
<protein>
    <recommendedName>
        <fullName evidence="1">Small ribosomal subunit protein uS8</fullName>
    </recommendedName>
    <alternativeName>
        <fullName evidence="2">30S ribosomal protein S8</fullName>
    </alternativeName>
</protein>
<organism>
    <name type="scientific">Laribacter hongkongensis (strain HLHK9)</name>
    <dbReference type="NCBI Taxonomy" id="557598"/>
    <lineage>
        <taxon>Bacteria</taxon>
        <taxon>Pseudomonadati</taxon>
        <taxon>Pseudomonadota</taxon>
        <taxon>Betaproteobacteria</taxon>
        <taxon>Neisseriales</taxon>
        <taxon>Aquaspirillaceae</taxon>
        <taxon>Laribacter</taxon>
    </lineage>
</organism>